<proteinExistence type="evidence at transcript level"/>
<accession>Q6AUK5</accession>
<accession>A0A0P0WM18</accession>
<keyword id="KW-0150">Chloroplast</keyword>
<keyword id="KW-1015">Disulfide bond</keyword>
<keyword id="KW-0249">Electron transport</keyword>
<keyword id="KW-0479">Metal-binding</keyword>
<keyword id="KW-0560">Oxidoreductase</keyword>
<keyword id="KW-0934">Plastid</keyword>
<keyword id="KW-0676">Redox-active center</keyword>
<keyword id="KW-1185">Reference proteome</keyword>
<keyword id="KW-0809">Transit peptide</keyword>
<keyword id="KW-0813">Transport</keyword>
<keyword id="KW-0862">Zinc</keyword>
<name>MSRB3_ORYSJ</name>
<reference key="1">
    <citation type="journal article" date="2005" name="Mol. Genet. Genomics">
        <title>A fine physical map of the rice chromosome 5.</title>
        <authorList>
            <person name="Cheng C.-H."/>
            <person name="Chung M.C."/>
            <person name="Liu S.-M."/>
            <person name="Chen S.-K."/>
            <person name="Kao F.Y."/>
            <person name="Lin S.-J."/>
            <person name="Hsiao S.-H."/>
            <person name="Tseng I.C."/>
            <person name="Hsing Y.-I.C."/>
            <person name="Wu H.-P."/>
            <person name="Chen C.-S."/>
            <person name="Shaw J.-F."/>
            <person name="Wu J."/>
            <person name="Matsumoto T."/>
            <person name="Sasaki T."/>
            <person name="Chen H.-C."/>
            <person name="Chow T.-Y."/>
        </authorList>
    </citation>
    <scope>NUCLEOTIDE SEQUENCE [LARGE SCALE GENOMIC DNA]</scope>
    <source>
        <strain>cv. Nipponbare</strain>
    </source>
</reference>
<reference key="2">
    <citation type="journal article" date="2005" name="Nature">
        <title>The map-based sequence of the rice genome.</title>
        <authorList>
            <consortium name="International rice genome sequencing project (IRGSP)"/>
        </authorList>
    </citation>
    <scope>NUCLEOTIDE SEQUENCE [LARGE SCALE GENOMIC DNA]</scope>
    <source>
        <strain>cv. Nipponbare</strain>
    </source>
</reference>
<reference key="3">
    <citation type="journal article" date="2008" name="Nucleic Acids Res.">
        <title>The rice annotation project database (RAP-DB): 2008 update.</title>
        <authorList>
            <consortium name="The rice annotation project (RAP)"/>
        </authorList>
    </citation>
    <scope>GENOME REANNOTATION</scope>
    <source>
        <strain>cv. Nipponbare</strain>
    </source>
</reference>
<reference key="4">
    <citation type="journal article" date="2013" name="Rice">
        <title>Improvement of the Oryza sativa Nipponbare reference genome using next generation sequence and optical map data.</title>
        <authorList>
            <person name="Kawahara Y."/>
            <person name="de la Bastide M."/>
            <person name="Hamilton J.P."/>
            <person name="Kanamori H."/>
            <person name="McCombie W.R."/>
            <person name="Ouyang S."/>
            <person name="Schwartz D.C."/>
            <person name="Tanaka T."/>
            <person name="Wu J."/>
            <person name="Zhou S."/>
            <person name="Childs K.L."/>
            <person name="Davidson R.M."/>
            <person name="Lin H."/>
            <person name="Quesada-Ocampo L."/>
            <person name="Vaillancourt B."/>
            <person name="Sakai H."/>
            <person name="Lee S.S."/>
            <person name="Kim J."/>
            <person name="Numa H."/>
            <person name="Itoh T."/>
            <person name="Buell C.R."/>
            <person name="Matsumoto T."/>
        </authorList>
    </citation>
    <scope>GENOME REANNOTATION</scope>
    <source>
        <strain>cv. Nipponbare</strain>
    </source>
</reference>
<reference key="5">
    <citation type="journal article" date="2003" name="Science">
        <title>Collection, mapping, and annotation of over 28,000 cDNA clones from japonica rice.</title>
        <authorList>
            <consortium name="The rice full-length cDNA consortium"/>
        </authorList>
    </citation>
    <scope>NUCLEOTIDE SEQUENCE [LARGE SCALE MRNA]</scope>
    <source>
        <strain>cv. Nipponbare</strain>
    </source>
</reference>
<reference key="6">
    <citation type="journal article" date="2006" name="Photosyn. Res.">
        <title>Plant methionine sulfoxide reductase A and B multigenic families.</title>
        <authorList>
            <person name="Rouhier N."/>
            <person name="Vieira Dos Santos C."/>
            <person name="Tarrago L."/>
            <person name="Rey P."/>
        </authorList>
    </citation>
    <scope>GENE FAMILY</scope>
    <scope>NOMENCLATURE</scope>
</reference>
<protein>
    <recommendedName>
        <fullName>Peptide methionine sulfoxide reductase B3, chloroplastic</fullName>
        <shortName>OsMSRB3</shortName>
        <ecNumber>1.8.4.12</ecNumber>
    </recommendedName>
    <alternativeName>
        <fullName>Peptide-methionine (R)-S-oxide reductase</fullName>
    </alternativeName>
</protein>
<evidence type="ECO:0000250" key="1"/>
<evidence type="ECO:0000255" key="2"/>
<evidence type="ECO:0000255" key="3">
    <source>
        <dbReference type="PROSITE-ProRule" id="PRU01126"/>
    </source>
</evidence>
<evidence type="ECO:0000305" key="4"/>
<dbReference type="EC" id="1.8.4.12"/>
<dbReference type="EMBL" id="AC120991">
    <property type="protein sequence ID" value="AAT85217.1"/>
    <property type="molecule type" value="Genomic_DNA"/>
</dbReference>
<dbReference type="EMBL" id="AP008211">
    <property type="protein sequence ID" value="BAF17415.1"/>
    <property type="molecule type" value="Genomic_DNA"/>
</dbReference>
<dbReference type="EMBL" id="AP014961">
    <property type="protein sequence ID" value="BAS93936.1"/>
    <property type="molecule type" value="Genomic_DNA"/>
</dbReference>
<dbReference type="EMBL" id="AK071730">
    <property type="protein sequence ID" value="BAG92658.1"/>
    <property type="molecule type" value="mRNA"/>
</dbReference>
<dbReference type="EMBL" id="AK104169">
    <property type="protein sequence ID" value="BAG96472.1"/>
    <property type="molecule type" value="mRNA"/>
</dbReference>
<dbReference type="RefSeq" id="XP_015637300.1">
    <property type="nucleotide sequence ID" value="XM_015781814.1"/>
</dbReference>
<dbReference type="SMR" id="Q6AUK5"/>
<dbReference type="FunCoup" id="Q6AUK5">
    <property type="interactions" value="43"/>
</dbReference>
<dbReference type="STRING" id="39947.Q6AUK5"/>
<dbReference type="PaxDb" id="39947-Q6AUK5"/>
<dbReference type="EnsemblPlants" id="Os05t0404200-01">
    <property type="protein sequence ID" value="Os05t0404200-01"/>
    <property type="gene ID" value="Os05g0404200"/>
</dbReference>
<dbReference type="Gramene" id="Os05t0404200-01">
    <property type="protein sequence ID" value="Os05t0404200-01"/>
    <property type="gene ID" value="Os05g0404200"/>
</dbReference>
<dbReference type="KEGG" id="dosa:Os05g0404200"/>
<dbReference type="eggNOG" id="KOG0856">
    <property type="taxonomic scope" value="Eukaryota"/>
</dbReference>
<dbReference type="InParanoid" id="Q6AUK5"/>
<dbReference type="OMA" id="LPHCNHN"/>
<dbReference type="OrthoDB" id="44061at2759"/>
<dbReference type="Proteomes" id="UP000000763">
    <property type="component" value="Chromosome 5"/>
</dbReference>
<dbReference type="Proteomes" id="UP000059680">
    <property type="component" value="Chromosome 5"/>
</dbReference>
<dbReference type="ExpressionAtlas" id="Q6AUK5">
    <property type="expression patterns" value="baseline and differential"/>
</dbReference>
<dbReference type="GO" id="GO:0009507">
    <property type="term" value="C:chloroplast"/>
    <property type="evidence" value="ECO:0007669"/>
    <property type="project" value="UniProtKB-SubCell"/>
</dbReference>
<dbReference type="GO" id="GO:0005737">
    <property type="term" value="C:cytoplasm"/>
    <property type="evidence" value="ECO:0000318"/>
    <property type="project" value="GO_Central"/>
</dbReference>
<dbReference type="GO" id="GO:0046872">
    <property type="term" value="F:metal ion binding"/>
    <property type="evidence" value="ECO:0007669"/>
    <property type="project" value="UniProtKB-KW"/>
</dbReference>
<dbReference type="GO" id="GO:0033743">
    <property type="term" value="F:peptide-methionine (R)-S-oxide reductase activity"/>
    <property type="evidence" value="ECO:0000318"/>
    <property type="project" value="GO_Central"/>
</dbReference>
<dbReference type="GO" id="GO:0034599">
    <property type="term" value="P:cellular response to oxidative stress"/>
    <property type="evidence" value="ECO:0000318"/>
    <property type="project" value="GO_Central"/>
</dbReference>
<dbReference type="GO" id="GO:0030091">
    <property type="term" value="P:protein repair"/>
    <property type="evidence" value="ECO:0007669"/>
    <property type="project" value="InterPro"/>
</dbReference>
<dbReference type="Gene3D" id="2.170.150.20">
    <property type="entry name" value="Peptide methionine sulfoxide reductase"/>
    <property type="match status" value="1"/>
</dbReference>
<dbReference type="InterPro" id="IPR028427">
    <property type="entry name" value="Met_Sox_Rdtase_MsrB"/>
</dbReference>
<dbReference type="InterPro" id="IPR002579">
    <property type="entry name" value="Met_Sox_Rdtase_MsrB_dom"/>
</dbReference>
<dbReference type="InterPro" id="IPR011057">
    <property type="entry name" value="Mss4-like_sf"/>
</dbReference>
<dbReference type="NCBIfam" id="TIGR00357">
    <property type="entry name" value="peptide-methionine (R)-S-oxide reductase MsrB"/>
    <property type="match status" value="1"/>
</dbReference>
<dbReference type="PANTHER" id="PTHR46081">
    <property type="entry name" value="PEPTIDE METHIONINE SULFOXIDE REDUCTASE 2"/>
    <property type="match status" value="1"/>
</dbReference>
<dbReference type="PANTHER" id="PTHR46081:SF8">
    <property type="entry name" value="PEPTIDE METHIONINE SULFOXIDE REDUCTASE 2"/>
    <property type="match status" value="1"/>
</dbReference>
<dbReference type="Pfam" id="PF01641">
    <property type="entry name" value="SelR"/>
    <property type="match status" value="1"/>
</dbReference>
<dbReference type="SUPFAM" id="SSF51316">
    <property type="entry name" value="Mss4-like"/>
    <property type="match status" value="1"/>
</dbReference>
<dbReference type="PROSITE" id="PS51790">
    <property type="entry name" value="MSRB"/>
    <property type="match status" value="1"/>
</dbReference>
<sequence length="229" mass="24685">MGVQHLLKLRMASPHPHPHPGAPLAARPLSALASFFLARPSSTAAAPPPRHVTLSCSRPHCNHNQWAASRCRGTAGRRRLQVVVAMSSSAPPPPPGSVQKSEEEWEAILSPEQFRILRLKGTEYPGTGEYDKLFAEGVYECAGCGTPLYKSSTKFNSGCGWPAFYEGFPGAIARTPDPDGRRIEITCAACGGHLGHVFKGEGFNTPTDERHCVNSISLKFIPASEDSKL</sequence>
<gene>
    <name type="primary">MSRB3</name>
    <name type="ordered locus">Os05g0404200</name>
    <name type="ordered locus">LOC_Os05g33510</name>
    <name type="ORF">OSJNBb0006J12.16</name>
</gene>
<feature type="transit peptide" description="Chloroplast" evidence="2">
    <location>
        <begin position="1"/>
        <end position="71"/>
    </location>
</feature>
<feature type="chain" id="PRO_0000395529" description="Peptide methionine sulfoxide reductase B3, chloroplastic">
    <location>
        <begin position="72"/>
        <end position="229"/>
    </location>
</feature>
<feature type="domain" description="MsrB" evidence="3">
    <location>
        <begin position="102"/>
        <end position="223"/>
    </location>
</feature>
<feature type="active site" description="Nucleophile" evidence="3">
    <location>
        <position position="212"/>
    </location>
</feature>
<feature type="binding site" evidence="3">
    <location>
        <position position="141"/>
    </location>
    <ligand>
        <name>Zn(2+)</name>
        <dbReference type="ChEBI" id="CHEBI:29105"/>
    </ligand>
</feature>
<feature type="binding site" evidence="3">
    <location>
        <position position="144"/>
    </location>
    <ligand>
        <name>Zn(2+)</name>
        <dbReference type="ChEBI" id="CHEBI:29105"/>
    </ligand>
</feature>
<feature type="binding site" evidence="3">
    <location>
        <position position="187"/>
    </location>
    <ligand>
        <name>Zn(2+)</name>
        <dbReference type="ChEBI" id="CHEBI:29105"/>
    </ligand>
</feature>
<feature type="binding site" evidence="3">
    <location>
        <position position="190"/>
    </location>
    <ligand>
        <name>Zn(2+)</name>
        <dbReference type="ChEBI" id="CHEBI:29105"/>
    </ligand>
</feature>
<feature type="disulfide bond" description="Redox-active" evidence="1">
    <location>
        <begin position="159"/>
        <end position="212"/>
    </location>
</feature>
<comment type="function">
    <text evidence="1">Catalyzes the reduction of methionine sulfoxide (MetSO) to methionine in proteins. Plays a protective role against oxidative stress by restoring activity to proteins that have been inactivated by methionine oxidation. MSRB family specifically reduces the MetSO R-enantiomer (By similarity).</text>
</comment>
<comment type="catalytic activity">
    <reaction>
        <text>L-methionyl-[protein] + [thioredoxin]-disulfide + H2O = L-methionyl-(R)-S-oxide-[protein] + [thioredoxin]-dithiol</text>
        <dbReference type="Rhea" id="RHEA:24164"/>
        <dbReference type="Rhea" id="RHEA-COMP:10698"/>
        <dbReference type="Rhea" id="RHEA-COMP:10700"/>
        <dbReference type="Rhea" id="RHEA-COMP:12313"/>
        <dbReference type="Rhea" id="RHEA-COMP:12314"/>
        <dbReference type="ChEBI" id="CHEBI:15377"/>
        <dbReference type="ChEBI" id="CHEBI:16044"/>
        <dbReference type="ChEBI" id="CHEBI:29950"/>
        <dbReference type="ChEBI" id="CHEBI:45764"/>
        <dbReference type="ChEBI" id="CHEBI:50058"/>
        <dbReference type="EC" id="1.8.4.12"/>
    </reaction>
</comment>
<comment type="cofactor">
    <cofactor evidence="1">
        <name>Zn(2+)</name>
        <dbReference type="ChEBI" id="CHEBI:29105"/>
    </cofactor>
    <text evidence="1">Binds 1 zinc ion per subunit.</text>
</comment>
<comment type="subcellular location">
    <subcellularLocation>
        <location evidence="4">Plastid</location>
        <location evidence="4">Chloroplast</location>
    </subcellularLocation>
</comment>
<comment type="similarity">
    <text evidence="4">Belongs to the MsrB Met sulfoxide reductase family.</text>
</comment>
<organism>
    <name type="scientific">Oryza sativa subsp. japonica</name>
    <name type="common">Rice</name>
    <dbReference type="NCBI Taxonomy" id="39947"/>
    <lineage>
        <taxon>Eukaryota</taxon>
        <taxon>Viridiplantae</taxon>
        <taxon>Streptophyta</taxon>
        <taxon>Embryophyta</taxon>
        <taxon>Tracheophyta</taxon>
        <taxon>Spermatophyta</taxon>
        <taxon>Magnoliopsida</taxon>
        <taxon>Liliopsida</taxon>
        <taxon>Poales</taxon>
        <taxon>Poaceae</taxon>
        <taxon>BOP clade</taxon>
        <taxon>Oryzoideae</taxon>
        <taxon>Oryzeae</taxon>
        <taxon>Oryzinae</taxon>
        <taxon>Oryza</taxon>
        <taxon>Oryza sativa</taxon>
    </lineage>
</organism>